<proteinExistence type="inferred from homology"/>
<reference evidence="6" key="1">
    <citation type="submission" date="2007-03" db="EMBL/GenBank/DDBJ databases">
        <title>Annotation of Culex pipiens quinquefasciatus.</title>
        <authorList>
            <consortium name="The Broad Institute Genome Sequencing Platform"/>
            <person name="Atkinson P.W."/>
            <person name="Hemingway J."/>
            <person name="Christensen B.M."/>
            <person name="Higgs S."/>
            <person name="Kodira C.D."/>
            <person name="Hannick L.I."/>
            <person name="Megy K."/>
            <person name="O'Leary S.B."/>
            <person name="Pearson M."/>
            <person name="Haas B.J."/>
            <person name="Mauceli E."/>
            <person name="Wortman J.R."/>
            <person name="Lee N.H."/>
            <person name="Guigo R."/>
            <person name="Stanke M."/>
            <person name="Alvarado L."/>
            <person name="Amedeo P."/>
            <person name="Antoine C.H."/>
            <person name="Arensburger P."/>
            <person name="Bidwell S.L."/>
            <person name="Crawford M."/>
            <person name="Camaro F."/>
            <person name="Devon K."/>
            <person name="Engels R."/>
            <person name="Hammond M."/>
            <person name="Howarth C."/>
            <person name="Koehrsen M."/>
            <person name="Lawson D."/>
            <person name="Montgomery P."/>
            <person name="Nene V."/>
            <person name="Nusbaum C."/>
            <person name="Puiu D."/>
            <person name="Romero-Severson J."/>
            <person name="Severson D.W."/>
            <person name="Shumway M."/>
            <person name="Sisk P."/>
            <person name="Stolte C."/>
            <person name="Zeng Q."/>
            <person name="Eisenstadt E."/>
            <person name="Fraser-Liggett C.M."/>
            <person name="Strausberg R."/>
            <person name="Galagan J."/>
            <person name="Birren B."/>
            <person name="Collins F.H."/>
        </authorList>
    </citation>
    <scope>NUCLEOTIDE SEQUENCE [LARGE SCALE GENOMIC DNA]</scope>
    <source>
        <strain evidence="6">JHB</strain>
    </source>
</reference>
<evidence type="ECO:0000250" key="1"/>
<evidence type="ECO:0000250" key="2">
    <source>
        <dbReference type="UniProtKB" id="P46150"/>
    </source>
</evidence>
<evidence type="ECO:0000250" key="3">
    <source>
        <dbReference type="UniProtKB" id="Q24564"/>
    </source>
</evidence>
<evidence type="ECO:0000255" key="4">
    <source>
        <dbReference type="PROSITE-ProRule" id="PRU00084"/>
    </source>
</evidence>
<evidence type="ECO:0000256" key="5">
    <source>
        <dbReference type="SAM" id="MobiDB-lite"/>
    </source>
</evidence>
<evidence type="ECO:0000312" key="6">
    <source>
        <dbReference type="EMBL" id="EDS37245.1"/>
    </source>
</evidence>
<protein>
    <recommendedName>
        <fullName evidence="2">Moesin/ezrin/radixin homolog 1</fullName>
    </recommendedName>
</protein>
<dbReference type="EMBL" id="DS232201">
    <property type="protein sequence ID" value="EDS37245.1"/>
    <property type="molecule type" value="Genomic_DNA"/>
</dbReference>
<dbReference type="RefSeq" id="XP_001862607.1">
    <property type="nucleotide sequence ID" value="XM_001862572.1"/>
</dbReference>
<dbReference type="SMR" id="B0WYY2"/>
<dbReference type="FunCoup" id="B0WYY2">
    <property type="interactions" value="775"/>
</dbReference>
<dbReference type="STRING" id="7176.B0WYY2"/>
<dbReference type="EnsemblMetazoa" id="CPIJ012259-RA">
    <property type="protein sequence ID" value="CPIJ012259-PA"/>
    <property type="gene ID" value="CPIJ012259"/>
</dbReference>
<dbReference type="KEGG" id="cqu:CpipJ_CPIJ012259"/>
<dbReference type="VEuPathDB" id="VectorBase:CPIJ012259"/>
<dbReference type="VEuPathDB" id="VectorBase:CQUJHB004297"/>
<dbReference type="eggNOG" id="KOG3529">
    <property type="taxonomic scope" value="Eukaryota"/>
</dbReference>
<dbReference type="HOGENOM" id="CLU_003623_6_2_1"/>
<dbReference type="InParanoid" id="B0WYY2"/>
<dbReference type="OMA" id="DMKTQET"/>
<dbReference type="OrthoDB" id="6018897at2759"/>
<dbReference type="PhylomeDB" id="B0WYY2"/>
<dbReference type="Proteomes" id="UP000002320">
    <property type="component" value="Unassembled WGS sequence"/>
</dbReference>
<dbReference type="GO" id="GO:0005912">
    <property type="term" value="C:adherens junction"/>
    <property type="evidence" value="ECO:0000250"/>
    <property type="project" value="UniProtKB"/>
</dbReference>
<dbReference type="GO" id="GO:0005737">
    <property type="term" value="C:cytoplasm"/>
    <property type="evidence" value="ECO:0007669"/>
    <property type="project" value="UniProtKB-KW"/>
</dbReference>
<dbReference type="GO" id="GO:0005856">
    <property type="term" value="C:cytoskeleton"/>
    <property type="evidence" value="ECO:0007669"/>
    <property type="project" value="UniProtKB-SubCell"/>
</dbReference>
<dbReference type="GO" id="GO:0005902">
    <property type="term" value="C:microvillus"/>
    <property type="evidence" value="ECO:0007669"/>
    <property type="project" value="UniProtKB-SubCell"/>
</dbReference>
<dbReference type="GO" id="GO:0005886">
    <property type="term" value="C:plasma membrane"/>
    <property type="evidence" value="ECO:0007669"/>
    <property type="project" value="UniProtKB-SubCell"/>
</dbReference>
<dbReference type="GO" id="GO:0016028">
    <property type="term" value="C:rhabdomere"/>
    <property type="evidence" value="ECO:0007669"/>
    <property type="project" value="UniProtKB-SubCell"/>
</dbReference>
<dbReference type="GO" id="GO:0003779">
    <property type="term" value="F:actin binding"/>
    <property type="evidence" value="ECO:0000250"/>
    <property type="project" value="UniProtKB"/>
</dbReference>
<dbReference type="GO" id="GO:0009887">
    <property type="term" value="P:animal organ morphogenesis"/>
    <property type="evidence" value="ECO:0007669"/>
    <property type="project" value="UniProtKB-ARBA"/>
</dbReference>
<dbReference type="GO" id="GO:0045197">
    <property type="term" value="P:establishment or maintenance of epithelial cell apical/basal polarity"/>
    <property type="evidence" value="ECO:0000250"/>
    <property type="project" value="UniProtKB"/>
</dbReference>
<dbReference type="GO" id="GO:0030182">
    <property type="term" value="P:neuron differentiation"/>
    <property type="evidence" value="ECO:0007669"/>
    <property type="project" value="UniProtKB-ARBA"/>
</dbReference>
<dbReference type="CDD" id="cd14473">
    <property type="entry name" value="FERM_B-lobe"/>
    <property type="match status" value="1"/>
</dbReference>
<dbReference type="CDD" id="cd13194">
    <property type="entry name" value="FERM_C_ERM"/>
    <property type="match status" value="1"/>
</dbReference>
<dbReference type="CDD" id="cd17187">
    <property type="entry name" value="FERM_F1_ERM"/>
    <property type="match status" value="1"/>
</dbReference>
<dbReference type="FunFam" id="2.30.29.30:FF:000003">
    <property type="entry name" value="Radixin isoform 1"/>
    <property type="match status" value="1"/>
</dbReference>
<dbReference type="FunFam" id="1.20.80.10:FF:000002">
    <property type="entry name" value="radixin isoform X1"/>
    <property type="match status" value="1"/>
</dbReference>
<dbReference type="FunFam" id="3.10.20.90:FF:000013">
    <property type="entry name" value="radixin isoform X1"/>
    <property type="match status" value="1"/>
</dbReference>
<dbReference type="FunFam" id="1.20.5.450:FF:000001">
    <property type="entry name" value="radixin isoform X2"/>
    <property type="match status" value="1"/>
</dbReference>
<dbReference type="Gene3D" id="1.20.5.450">
    <property type="match status" value="1"/>
</dbReference>
<dbReference type="Gene3D" id="1.20.80.10">
    <property type="match status" value="1"/>
</dbReference>
<dbReference type="Gene3D" id="6.10.360.10">
    <property type="match status" value="1"/>
</dbReference>
<dbReference type="Gene3D" id="3.10.20.90">
    <property type="entry name" value="Phosphatidylinositol 3-kinase Catalytic Subunit, Chain A, domain 1"/>
    <property type="match status" value="1"/>
</dbReference>
<dbReference type="Gene3D" id="2.30.29.30">
    <property type="entry name" value="Pleckstrin-homology domain (PH domain)/Phosphotyrosine-binding domain (PTB)"/>
    <property type="match status" value="1"/>
</dbReference>
<dbReference type="InterPro" id="IPR019749">
    <property type="entry name" value="Band_41_domain"/>
</dbReference>
<dbReference type="InterPro" id="IPR011174">
    <property type="entry name" value="ERM"/>
</dbReference>
<dbReference type="InterPro" id="IPR011259">
    <property type="entry name" value="ERM_C_dom"/>
</dbReference>
<dbReference type="InterPro" id="IPR041789">
    <property type="entry name" value="ERM_FERM_C"/>
</dbReference>
<dbReference type="InterPro" id="IPR046810">
    <property type="entry name" value="ERM_helical"/>
</dbReference>
<dbReference type="InterPro" id="IPR000798">
    <property type="entry name" value="Ez/rad/moesin-like"/>
</dbReference>
<dbReference type="InterPro" id="IPR014352">
    <property type="entry name" value="FERM/acyl-CoA-bd_prot_sf"/>
</dbReference>
<dbReference type="InterPro" id="IPR035963">
    <property type="entry name" value="FERM_2"/>
</dbReference>
<dbReference type="InterPro" id="IPR019748">
    <property type="entry name" value="FERM_central"/>
</dbReference>
<dbReference type="InterPro" id="IPR019747">
    <property type="entry name" value="FERM_CS"/>
</dbReference>
<dbReference type="InterPro" id="IPR000299">
    <property type="entry name" value="FERM_domain"/>
</dbReference>
<dbReference type="InterPro" id="IPR018979">
    <property type="entry name" value="FERM_N"/>
</dbReference>
<dbReference type="InterPro" id="IPR018980">
    <property type="entry name" value="FERM_PH-like_C"/>
</dbReference>
<dbReference type="InterPro" id="IPR008954">
    <property type="entry name" value="Moesin_tail_sf"/>
</dbReference>
<dbReference type="InterPro" id="IPR011993">
    <property type="entry name" value="PH-like_dom_sf"/>
</dbReference>
<dbReference type="InterPro" id="IPR029071">
    <property type="entry name" value="Ubiquitin-like_domsf"/>
</dbReference>
<dbReference type="PANTHER" id="PTHR23281">
    <property type="entry name" value="MERLIN/MOESIN/EZRIN/RADIXIN"/>
    <property type="match status" value="1"/>
</dbReference>
<dbReference type="Pfam" id="PF00769">
    <property type="entry name" value="ERM_C"/>
    <property type="match status" value="1"/>
</dbReference>
<dbReference type="Pfam" id="PF20492">
    <property type="entry name" value="ERM_helical"/>
    <property type="match status" value="1"/>
</dbReference>
<dbReference type="Pfam" id="PF09380">
    <property type="entry name" value="FERM_C"/>
    <property type="match status" value="1"/>
</dbReference>
<dbReference type="Pfam" id="PF00373">
    <property type="entry name" value="FERM_M"/>
    <property type="match status" value="1"/>
</dbReference>
<dbReference type="Pfam" id="PF09379">
    <property type="entry name" value="FERM_N"/>
    <property type="match status" value="1"/>
</dbReference>
<dbReference type="PIRSF" id="PIRSF002305">
    <property type="entry name" value="ERM"/>
    <property type="match status" value="1"/>
</dbReference>
<dbReference type="PRINTS" id="PR00935">
    <property type="entry name" value="BAND41"/>
</dbReference>
<dbReference type="PRINTS" id="PR00661">
    <property type="entry name" value="ERMFAMILY"/>
</dbReference>
<dbReference type="SMART" id="SM00295">
    <property type="entry name" value="B41"/>
    <property type="match status" value="1"/>
</dbReference>
<dbReference type="SMART" id="SM01196">
    <property type="entry name" value="FERM_C"/>
    <property type="match status" value="1"/>
</dbReference>
<dbReference type="SUPFAM" id="SSF48678">
    <property type="entry name" value="Moesin tail domain"/>
    <property type="match status" value="1"/>
</dbReference>
<dbReference type="SUPFAM" id="SSF50729">
    <property type="entry name" value="PH domain-like"/>
    <property type="match status" value="1"/>
</dbReference>
<dbReference type="SUPFAM" id="SSF47031">
    <property type="entry name" value="Second domain of FERM"/>
    <property type="match status" value="1"/>
</dbReference>
<dbReference type="SUPFAM" id="SSF54236">
    <property type="entry name" value="Ubiquitin-like"/>
    <property type="match status" value="1"/>
</dbReference>
<dbReference type="PROSITE" id="PS00660">
    <property type="entry name" value="FERM_1"/>
    <property type="match status" value="1"/>
</dbReference>
<dbReference type="PROSITE" id="PS00661">
    <property type="entry name" value="FERM_2"/>
    <property type="match status" value="1"/>
</dbReference>
<dbReference type="PROSITE" id="PS50057">
    <property type="entry name" value="FERM_3"/>
    <property type="match status" value="1"/>
</dbReference>
<name>MOEH_CULQU</name>
<accession>B0WYY2</accession>
<gene>
    <name evidence="2" type="primary">Moe</name>
    <name type="ORF">CPIJ012259</name>
</gene>
<organism>
    <name type="scientific">Culex quinquefasciatus</name>
    <name type="common">Southern house mosquito</name>
    <name type="synonym">Culex pungens</name>
    <dbReference type="NCBI Taxonomy" id="7176"/>
    <lineage>
        <taxon>Eukaryota</taxon>
        <taxon>Metazoa</taxon>
        <taxon>Ecdysozoa</taxon>
        <taxon>Arthropoda</taxon>
        <taxon>Hexapoda</taxon>
        <taxon>Insecta</taxon>
        <taxon>Pterygota</taxon>
        <taxon>Neoptera</taxon>
        <taxon>Endopterygota</taxon>
        <taxon>Diptera</taxon>
        <taxon>Nematocera</taxon>
        <taxon>Culicoidea</taxon>
        <taxon>Culicidae</taxon>
        <taxon>Culicinae</taxon>
        <taxon>Culicini</taxon>
        <taxon>Culex</taxon>
        <taxon>Culex</taxon>
    </lineage>
</organism>
<comment type="function">
    <text evidence="2">Involved in connections of major cytoskeletal structures to the plasma membrane.</text>
</comment>
<comment type="subunit">
    <text evidence="1">Interacts with cytoskeletal actin.</text>
</comment>
<comment type="subcellular location">
    <subcellularLocation>
        <location evidence="2">Cell junction</location>
        <location evidence="2">Adherens junction</location>
    </subcellularLocation>
    <subcellularLocation>
        <location evidence="2">Cell projection</location>
        <location evidence="2">Microvillus</location>
    </subcellularLocation>
    <subcellularLocation>
        <location evidence="2">Cell projection</location>
        <location evidence="2">Rhabdomere</location>
    </subcellularLocation>
    <subcellularLocation>
        <location evidence="3">Cell membrane</location>
        <topology evidence="3">Peripheral membrane protein</topology>
        <orientation evidence="3">Cytoplasmic side</orientation>
    </subcellularLocation>
    <subcellularLocation>
        <location evidence="3">Cytoplasm</location>
        <location evidence="3">Cytoskeleton</location>
    </subcellularLocation>
</comment>
<feature type="chain" id="PRO_0000355094" description="Moesin/ezrin/radixin homolog 1">
    <location>
        <begin position="1"/>
        <end position="572"/>
    </location>
</feature>
<feature type="domain" description="FERM" evidence="4">
    <location>
        <begin position="1"/>
        <end position="291"/>
    </location>
</feature>
<feature type="region of interest" description="Disordered" evidence="5">
    <location>
        <begin position="456"/>
        <end position="491"/>
    </location>
</feature>
<feature type="compositionally biased region" description="Acidic residues" evidence="5">
    <location>
        <begin position="466"/>
        <end position="477"/>
    </location>
</feature>
<feature type="modified residue" description="Phosphothreonine" evidence="2">
    <location>
        <position position="553"/>
    </location>
</feature>
<keyword id="KW-0009">Actin-binding</keyword>
<keyword id="KW-0965">Cell junction</keyword>
<keyword id="KW-1003">Cell membrane</keyword>
<keyword id="KW-0966">Cell projection</keyword>
<keyword id="KW-0963">Cytoplasm</keyword>
<keyword id="KW-0206">Cytoskeleton</keyword>
<keyword id="KW-0472">Membrane</keyword>
<keyword id="KW-0597">Phosphoprotein</keyword>
<keyword id="KW-1185">Reference proteome</keyword>
<sequence length="572" mass="67748">MNVRVTTMDAELEFAIQQSTTGKQLFDQVVKTIGLREVWFFGLQYTDSKGDLTWIKLYKKVMSQDVQKGDPLQFKFRAKFYPEDVAEELIQDITLRLFYLQVKNAILSDEIYCPPETSVLLASYAVQARHGDYNKTTHTPGFLVNDRLLPQRVIDQHKMSKDEWENSITTWWQEHRGMLREDAMMEYLKIAQDLEMYGVNYFEIRNKKGTELWLGVDALGLNIYEKDDRLTPKIGFPWSEIRNISFNDRKFIIKPIDKKAPDFVFFAPRVRINKRILALCMGNHELYMRRRKPDTIDVQQMKAQAREEKNAKQQEREKLQLALAARERAEKKQQEYEDRIRNMQEEMERSQANLIEAQDMIRRLEEQLKQLQAAKDDLEQRQNELQVMITRLEETKNMEAAERAKLEDEIRMKQEEVHKIQEEVSVKDSETKRLQEEVEEARRKQTEAAAALLAATTTPSHHHVEEEEEMDNEEELVNGENGNQDFSKDFDTDEHIKDPVEERRTLAERNERLHDQLKALKQDLALSRDDTMETANDKIHRENVRQGRDKYKTLREIRKGNTKRRVDQFENM</sequence>